<gene>
    <name evidence="3" type="primary">iliD</name>
</gene>
<reference key="1">
    <citation type="journal article" date="2019" name="Molecules">
        <title>Heterologous expression of ilicicolin H biosynthetic gene cluster and production of a new potent antifungal reagent, ilicicolin J.</title>
        <authorList>
            <person name="Lin X."/>
            <person name="Yuan S."/>
            <person name="Chen S."/>
            <person name="Chen B."/>
            <person name="Xu H."/>
            <person name="Liu L."/>
            <person name="Li H."/>
            <person name="Gao Z."/>
        </authorList>
    </citation>
    <scope>NUCLEOTIDE SEQUENCE [LARGE SCALE GENOMIC DNA]</scope>
    <scope>FUNCTION</scope>
    <scope>CATALYTIC ACTIVITY</scope>
    <scope>PATHWAY</scope>
</reference>
<proteinExistence type="evidence at protein level"/>
<name>ILID_NEOS2</name>
<comment type="function">
    <text evidence="2 5">S-adenosyl-l-methionine-dependent Diels-Alderase; part of the gene cluster that mediates the biosynthesis of ilicicolin H, a 4-hydroxy-2-pyridonealkaloid that has potent and broad antifungal activities by inhibiting the mitochondrial respiration chain (PubMed:31216742). IliD catalyzes the Diels-Alder reaction that converts the acyclic 2-pyridone intermediate to 8-epi-ilicicolin H (PubMed:31216742). The biosynthesis of ilicicolin H starts with formation of the tetramic acid by the hybrid PKS-NRPS synthetase iliA with the partnering trans-enoyl reductase iliB since iliA lacks a designated enoylreductase (ER) domain. The cytochrome P450 monooxygenase iliC then catalyzes the ring expansion of the tetramate to the acyclic 2-pyridone. The pericyclase iliD further converts the acyclic 2-pyridone into 8-epi-ilicicolin H. 8-epi-ilicicolin H might then spontaneously convert to ilicicolin H since ilicicolin H is produced in the absence of the epimerase iliE, in contrast to what was observed for the Talaromyces variabilis ilicolin H biosynthetic pathway (Probable) (PubMed:31216742).</text>
</comment>
<comment type="catalytic activity">
    <reaction evidence="2">
        <text>3-[(2E,4E,8S,10E,12Z)-4,8-dimethyltetradeca-2,4,10,12-tetraenoyl]-4-hydroxy-5-(4-hydroxyphenyl)-1,2-dihydropyridin-2-one = ilicicolin H</text>
        <dbReference type="Rhea" id="RHEA:64568"/>
        <dbReference type="ChEBI" id="CHEBI:77772"/>
        <dbReference type="ChEBI" id="CHEBI:155889"/>
    </reaction>
    <physiologicalReaction direction="left-to-right" evidence="2">
        <dbReference type="Rhea" id="RHEA:64569"/>
    </physiologicalReaction>
</comment>
<comment type="cofactor">
    <cofactor evidence="5">
        <name>S-adenosyl-L-methionine</name>
        <dbReference type="ChEBI" id="CHEBI:59789"/>
    </cofactor>
</comment>
<comment type="pathway">
    <text evidence="2">Mycotoxin biosynthesis.</text>
</comment>
<comment type="similarity">
    <text evidence="4">Belongs to the class I-like SAM-binding methyltransferase superfamily. Erg6/SMT family.</text>
</comment>
<organism>
    <name type="scientific">Neonectria sp. (strain DH2)</name>
    <dbReference type="NCBI Taxonomy" id="1735992"/>
    <lineage>
        <taxon>Eukaryota</taxon>
        <taxon>Fungi</taxon>
        <taxon>Dikarya</taxon>
        <taxon>Ascomycota</taxon>
        <taxon>Pezizomycotina</taxon>
        <taxon>Sordariomycetes</taxon>
        <taxon>Hypocreomycetidae</taxon>
        <taxon>Hypocreales</taxon>
        <taxon>Nectriaceae</taxon>
        <taxon>Neonectria</taxon>
    </lineage>
</organism>
<protein>
    <recommendedName>
        <fullName evidence="3">S-adenosyl-L-methionine-dependent Diels-Alderase iliD</fullName>
        <ecNumber evidence="2">2.1.-.-</ecNumber>
    </recommendedName>
    <alternativeName>
        <fullName evidence="3">C-methyltransferase iliD</fullName>
    </alternativeName>
    <alternativeName>
        <fullName evidence="3">Ilicicolin H biosynthesis cluster protein D</fullName>
    </alternativeName>
    <alternativeName>
        <fullName evidence="1">Pericyclase iliD</fullName>
    </alternativeName>
</protein>
<accession>P0DO33</accession>
<feature type="chain" id="PRO_0000453070" description="S-adenosyl-L-methionine-dependent Diels-Alderase iliD">
    <location>
        <begin position="1"/>
        <end position="244"/>
    </location>
</feature>
<keyword id="KW-0808">Transferase</keyword>
<sequence length="244" mass="27012">MTSTEAAGTGKAPAIRANPALQTYYESQESYLVYEVVLRGSHHFGFYEKDTYWPFPVGRSLERMEAKLLSALALPSGSQILDAGCGFGPVAISMAKKGMRVTAIDIIDHHVTKARRNVEKAGLPKGQVTVEKMDYQHLESIASESHDDAKAAATGFFRILKPGGRIAFFEAQRSRTSGDYDEGDELAGHLKLVNEYTAMPTNELSREDYFKDLLEDAGFVDVEFTLPPGTREPREHWSYSALKA</sequence>
<dbReference type="EC" id="2.1.-.-" evidence="2"/>
<dbReference type="GO" id="GO:0005783">
    <property type="term" value="C:endoplasmic reticulum"/>
    <property type="evidence" value="ECO:0007669"/>
    <property type="project" value="TreeGrafter"/>
</dbReference>
<dbReference type="GO" id="GO:0009975">
    <property type="term" value="F:cyclase activity"/>
    <property type="evidence" value="ECO:0000314"/>
    <property type="project" value="UniProt"/>
</dbReference>
<dbReference type="GO" id="GO:0016218">
    <property type="term" value="F:polyketide synthase activity"/>
    <property type="evidence" value="ECO:0000314"/>
    <property type="project" value="UniProt"/>
</dbReference>
<dbReference type="GO" id="GO:0003838">
    <property type="term" value="F:sterol 24-C-methyltransferase activity"/>
    <property type="evidence" value="ECO:0007669"/>
    <property type="project" value="TreeGrafter"/>
</dbReference>
<dbReference type="GO" id="GO:0006696">
    <property type="term" value="P:ergosterol biosynthetic process"/>
    <property type="evidence" value="ECO:0007669"/>
    <property type="project" value="TreeGrafter"/>
</dbReference>
<dbReference type="GO" id="GO:0140781">
    <property type="term" value="P:ilicicolin H biosynthetic process"/>
    <property type="evidence" value="ECO:0000314"/>
    <property type="project" value="GO_Central"/>
</dbReference>
<dbReference type="CDD" id="cd02440">
    <property type="entry name" value="AdoMet_MTases"/>
    <property type="match status" value="1"/>
</dbReference>
<dbReference type="Gene3D" id="3.40.50.150">
    <property type="entry name" value="Vaccinia Virus protein VP39"/>
    <property type="match status" value="1"/>
</dbReference>
<dbReference type="InterPro" id="IPR050447">
    <property type="entry name" value="Erg6_SMT_methyltransf"/>
</dbReference>
<dbReference type="InterPro" id="IPR041698">
    <property type="entry name" value="Methyltransf_25"/>
</dbReference>
<dbReference type="InterPro" id="IPR029063">
    <property type="entry name" value="SAM-dependent_MTases_sf"/>
</dbReference>
<dbReference type="PANTHER" id="PTHR44068:SF1">
    <property type="entry name" value="HYPOTHETICAL LOC100005854"/>
    <property type="match status" value="1"/>
</dbReference>
<dbReference type="PANTHER" id="PTHR44068">
    <property type="entry name" value="ZGC:194242"/>
    <property type="match status" value="1"/>
</dbReference>
<dbReference type="Pfam" id="PF13649">
    <property type="entry name" value="Methyltransf_25"/>
    <property type="match status" value="1"/>
</dbReference>
<dbReference type="SUPFAM" id="SSF53335">
    <property type="entry name" value="S-adenosyl-L-methionine-dependent methyltransferases"/>
    <property type="match status" value="1"/>
</dbReference>
<evidence type="ECO:0000250" key="1">
    <source>
        <dbReference type="UniProtKB" id="A0A482NB13"/>
    </source>
</evidence>
<evidence type="ECO:0000269" key="2">
    <source>
    </source>
</evidence>
<evidence type="ECO:0000303" key="3">
    <source>
    </source>
</evidence>
<evidence type="ECO:0000305" key="4"/>
<evidence type="ECO:0000305" key="5">
    <source>
    </source>
</evidence>